<reference key="1">
    <citation type="journal article" date="2000" name="Nucleic Acids Res.">
        <title>Complete genome sequence of the alkaliphilic bacterium Bacillus halodurans and genomic sequence comparison with Bacillus subtilis.</title>
        <authorList>
            <person name="Takami H."/>
            <person name="Nakasone K."/>
            <person name="Takaki Y."/>
            <person name="Maeno G."/>
            <person name="Sasaki R."/>
            <person name="Masui N."/>
            <person name="Fuji F."/>
            <person name="Hirama C."/>
            <person name="Nakamura Y."/>
            <person name="Ogasawara N."/>
            <person name="Kuhara S."/>
            <person name="Horikoshi K."/>
        </authorList>
    </citation>
    <scope>NUCLEOTIDE SEQUENCE [LARGE SCALE GENOMIC DNA]</scope>
    <source>
        <strain>ATCC BAA-125 / DSM 18197 / FERM 7344 / JCM 9153 / C-125</strain>
    </source>
</reference>
<name>RSMI_HALH5</name>
<comment type="function">
    <text evidence="1">Catalyzes the 2'-O-methylation of the ribose of cytidine 1402 (C1402) in 16S rRNA.</text>
</comment>
<comment type="catalytic activity">
    <reaction evidence="1">
        <text>cytidine(1402) in 16S rRNA + S-adenosyl-L-methionine = 2'-O-methylcytidine(1402) in 16S rRNA + S-adenosyl-L-homocysteine + H(+)</text>
        <dbReference type="Rhea" id="RHEA:42924"/>
        <dbReference type="Rhea" id="RHEA-COMP:10285"/>
        <dbReference type="Rhea" id="RHEA-COMP:10286"/>
        <dbReference type="ChEBI" id="CHEBI:15378"/>
        <dbReference type="ChEBI" id="CHEBI:57856"/>
        <dbReference type="ChEBI" id="CHEBI:59789"/>
        <dbReference type="ChEBI" id="CHEBI:74495"/>
        <dbReference type="ChEBI" id="CHEBI:82748"/>
        <dbReference type="EC" id="2.1.1.198"/>
    </reaction>
</comment>
<comment type="subcellular location">
    <subcellularLocation>
        <location evidence="1">Cytoplasm</location>
    </subcellularLocation>
</comment>
<comment type="similarity">
    <text evidence="1">Belongs to the methyltransferase superfamily. RsmI family.</text>
</comment>
<dbReference type="EC" id="2.1.1.198" evidence="1"/>
<dbReference type="EMBL" id="BA000004">
    <property type="protein sequence ID" value="BAB03768.1"/>
    <property type="molecule type" value="Genomic_DNA"/>
</dbReference>
<dbReference type="PIR" id="A83656">
    <property type="entry name" value="A83656"/>
</dbReference>
<dbReference type="RefSeq" id="WP_010896233.1">
    <property type="nucleotide sequence ID" value="NC_002570.2"/>
</dbReference>
<dbReference type="SMR" id="Q9KGL2"/>
<dbReference type="STRING" id="272558.gene:10725871"/>
<dbReference type="DNASU" id="892679"/>
<dbReference type="KEGG" id="bha:BH0049"/>
<dbReference type="eggNOG" id="COG0313">
    <property type="taxonomic scope" value="Bacteria"/>
</dbReference>
<dbReference type="HOGENOM" id="CLU_044779_1_0_9"/>
<dbReference type="OrthoDB" id="9809084at2"/>
<dbReference type="Proteomes" id="UP000001258">
    <property type="component" value="Chromosome"/>
</dbReference>
<dbReference type="GO" id="GO:0005737">
    <property type="term" value="C:cytoplasm"/>
    <property type="evidence" value="ECO:0007669"/>
    <property type="project" value="UniProtKB-SubCell"/>
</dbReference>
<dbReference type="GO" id="GO:0070677">
    <property type="term" value="F:rRNA (cytosine-2'-O-)-methyltransferase activity"/>
    <property type="evidence" value="ECO:0007669"/>
    <property type="project" value="UniProtKB-UniRule"/>
</dbReference>
<dbReference type="CDD" id="cd11648">
    <property type="entry name" value="RsmI"/>
    <property type="match status" value="1"/>
</dbReference>
<dbReference type="FunFam" id="3.30.950.10:FF:000002">
    <property type="entry name" value="Ribosomal RNA small subunit methyltransferase I"/>
    <property type="match status" value="1"/>
</dbReference>
<dbReference type="FunFam" id="3.40.1010.10:FF:000002">
    <property type="entry name" value="Ribosomal RNA small subunit methyltransferase I"/>
    <property type="match status" value="1"/>
</dbReference>
<dbReference type="Gene3D" id="3.40.1010.10">
    <property type="entry name" value="Cobalt-precorrin-4 Transmethylase, Domain 1"/>
    <property type="match status" value="1"/>
</dbReference>
<dbReference type="Gene3D" id="3.30.950.10">
    <property type="entry name" value="Methyltransferase, Cobalt-precorrin-4 Transmethylase, Domain 2"/>
    <property type="match status" value="1"/>
</dbReference>
<dbReference type="HAMAP" id="MF_01877">
    <property type="entry name" value="16SrRNA_methyltr_I"/>
    <property type="match status" value="1"/>
</dbReference>
<dbReference type="InterPro" id="IPR000878">
    <property type="entry name" value="4pyrrol_Mease"/>
</dbReference>
<dbReference type="InterPro" id="IPR035996">
    <property type="entry name" value="4pyrrol_Methylase_sf"/>
</dbReference>
<dbReference type="InterPro" id="IPR014777">
    <property type="entry name" value="4pyrrole_Mease_sub1"/>
</dbReference>
<dbReference type="InterPro" id="IPR014776">
    <property type="entry name" value="4pyrrole_Mease_sub2"/>
</dbReference>
<dbReference type="InterPro" id="IPR008189">
    <property type="entry name" value="rRNA_ssu_MeTfrase_I"/>
</dbReference>
<dbReference type="InterPro" id="IPR018063">
    <property type="entry name" value="SAM_MeTrfase_RsmI_CS"/>
</dbReference>
<dbReference type="NCBIfam" id="TIGR00096">
    <property type="entry name" value="16S rRNA (cytidine(1402)-2'-O)-methyltransferase"/>
    <property type="match status" value="1"/>
</dbReference>
<dbReference type="PANTHER" id="PTHR46111">
    <property type="entry name" value="RIBOSOMAL RNA SMALL SUBUNIT METHYLTRANSFERASE I"/>
    <property type="match status" value="1"/>
</dbReference>
<dbReference type="PANTHER" id="PTHR46111:SF1">
    <property type="entry name" value="RIBOSOMAL RNA SMALL SUBUNIT METHYLTRANSFERASE I"/>
    <property type="match status" value="1"/>
</dbReference>
<dbReference type="Pfam" id="PF00590">
    <property type="entry name" value="TP_methylase"/>
    <property type="match status" value="1"/>
</dbReference>
<dbReference type="PIRSF" id="PIRSF005917">
    <property type="entry name" value="MTase_YraL"/>
    <property type="match status" value="1"/>
</dbReference>
<dbReference type="SUPFAM" id="SSF53790">
    <property type="entry name" value="Tetrapyrrole methylase"/>
    <property type="match status" value="1"/>
</dbReference>
<dbReference type="PROSITE" id="PS01296">
    <property type="entry name" value="RSMI"/>
    <property type="match status" value="1"/>
</dbReference>
<evidence type="ECO:0000255" key="1">
    <source>
        <dbReference type="HAMAP-Rule" id="MF_01877"/>
    </source>
</evidence>
<accession>Q9KGL2</accession>
<proteinExistence type="inferred from homology"/>
<gene>
    <name evidence="1" type="primary">rsmI</name>
    <name type="ordered locus">BH0049</name>
</gene>
<protein>
    <recommendedName>
        <fullName evidence="1">Ribosomal RNA small subunit methyltransferase I</fullName>
        <ecNumber evidence="1">2.1.1.198</ecNumber>
    </recommendedName>
    <alternativeName>
        <fullName evidence="1">16S rRNA 2'-O-ribose C1402 methyltransferase</fullName>
    </alternativeName>
    <alternativeName>
        <fullName evidence="1">rRNA (cytidine-2'-O-)-methyltransferase RsmI</fullName>
    </alternativeName>
</protein>
<keyword id="KW-0963">Cytoplasm</keyword>
<keyword id="KW-0489">Methyltransferase</keyword>
<keyword id="KW-1185">Reference proteome</keyword>
<keyword id="KW-0698">rRNA processing</keyword>
<keyword id="KW-0949">S-adenosyl-L-methionine</keyword>
<keyword id="KW-0808">Transferase</keyword>
<feature type="chain" id="PRO_0000211933" description="Ribosomal RNA small subunit methyltransferase I">
    <location>
        <begin position="1"/>
        <end position="289"/>
    </location>
</feature>
<sequence>MKTQQSYQQRDDKGTLYLVATPIGNLEDVTFRAIRTLKEADQIAAEDTRQTKKLLNHFDIATKLVSYHEHNKETMGKRLIDDLIEGRTIALVSDAGMPAISDPGYELVVSAIKEGIAVIPIPGANAAVTALIASGLPTESFQFIGFLPRQKKQRRQALEETKPTKATLIFYESPHRLKDTLDDMLLILGNRHVSICRELTKTYEEFLRGTLEEAVHWAREATIKGEFCLIVEGNGEKVEPEEVWWESLSPVQHVEHYIALGFRSKEAIKQVATDRGVPKRDIYNIYHQE</sequence>
<organism>
    <name type="scientific">Halalkalibacterium halodurans (strain ATCC BAA-125 / DSM 18197 / FERM 7344 / JCM 9153 / C-125)</name>
    <name type="common">Bacillus halodurans</name>
    <dbReference type="NCBI Taxonomy" id="272558"/>
    <lineage>
        <taxon>Bacteria</taxon>
        <taxon>Bacillati</taxon>
        <taxon>Bacillota</taxon>
        <taxon>Bacilli</taxon>
        <taxon>Bacillales</taxon>
        <taxon>Bacillaceae</taxon>
        <taxon>Halalkalibacterium (ex Joshi et al. 2022)</taxon>
    </lineage>
</organism>